<protein>
    <recommendedName>
        <fullName>Salmocidin-1</fullName>
    </recommendedName>
</protein>
<organism>
    <name type="scientific">Oncorhynchus mykiss</name>
    <name type="common">Rainbow trout</name>
    <name type="synonym">Salmo gairdneri</name>
    <dbReference type="NCBI Taxonomy" id="8022"/>
    <lineage>
        <taxon>Eukaryota</taxon>
        <taxon>Metazoa</taxon>
        <taxon>Chordata</taxon>
        <taxon>Craniata</taxon>
        <taxon>Vertebrata</taxon>
        <taxon>Euteleostomi</taxon>
        <taxon>Actinopterygii</taxon>
        <taxon>Neopterygii</taxon>
        <taxon>Teleostei</taxon>
        <taxon>Protacanthopterygii</taxon>
        <taxon>Salmoniformes</taxon>
        <taxon>Salmonidae</taxon>
        <taxon>Salmoninae</taxon>
        <taxon>Oncorhynchus</taxon>
    </lineage>
</organism>
<sequence>XXSVPAFGHYLPAXP</sequence>
<keyword id="KW-0044">Antibiotic</keyword>
<keyword id="KW-0929">Antimicrobial</keyword>
<keyword id="KW-0903">Direct protein sequencing</keyword>
<keyword id="KW-0964">Secreted</keyword>
<name>SAL1_ONCMY</name>
<reference key="1">
    <citation type="submission" date="1998-05" db="UniProtKB">
        <title>Isolation and N-terminal sequencing of an antibacterial peptide in rainbow trout, Oncorhynchus mykiss.</title>
        <authorList>
            <person name="Henry M.A."/>
            <person name="Siegert K.J."/>
            <person name="Davidson I."/>
            <person name="Dunbar B."/>
            <person name="Mordue W."/>
            <person name="Secombes C.J."/>
        </authorList>
    </citation>
    <scope>PROTEIN SEQUENCE</scope>
    <source>
        <tissue>Serum</tissue>
    </source>
</reference>
<proteinExistence type="evidence at protein level"/>
<dbReference type="Proteomes" id="UP000694395">
    <property type="component" value="Unplaced"/>
</dbReference>
<dbReference type="GO" id="GO:0005576">
    <property type="term" value="C:extracellular region"/>
    <property type="evidence" value="ECO:0007669"/>
    <property type="project" value="UniProtKB-SubCell"/>
</dbReference>
<dbReference type="GO" id="GO:0042742">
    <property type="term" value="P:defense response to bacterium"/>
    <property type="evidence" value="ECO:0007669"/>
    <property type="project" value="UniProtKB-KW"/>
</dbReference>
<comment type="function">
    <text>Antibacterial peptide.</text>
</comment>
<comment type="subcellular location">
    <subcellularLocation>
        <location>Secreted</location>
    </subcellularLocation>
</comment>
<comment type="tissue specificity">
    <text>Plasma serum.</text>
</comment>
<accession>P81369</accession>
<feature type="peptide" id="PRO_0000045110" description="Salmocidin-1">
    <location>
        <begin position="1"/>
        <end position="15" status="greater than"/>
    </location>
</feature>
<feature type="non-terminal residue">
    <location>
        <position position="15"/>
    </location>
</feature>